<proteinExistence type="inferred from homology"/>
<organism>
    <name type="scientific">Neosartorya fischeri (strain ATCC 1020 / DSM 3700 / CBS 544.65 / FGSC A1164 / JCM 1740 / NRRL 181 / WB 181)</name>
    <name type="common">Aspergillus fischerianus</name>
    <dbReference type="NCBI Taxonomy" id="331117"/>
    <lineage>
        <taxon>Eukaryota</taxon>
        <taxon>Fungi</taxon>
        <taxon>Dikarya</taxon>
        <taxon>Ascomycota</taxon>
        <taxon>Pezizomycotina</taxon>
        <taxon>Eurotiomycetes</taxon>
        <taxon>Eurotiomycetidae</taxon>
        <taxon>Eurotiales</taxon>
        <taxon>Aspergillaceae</taxon>
        <taxon>Aspergillus</taxon>
        <taxon>Aspergillus subgen. Fumigati</taxon>
    </lineage>
</organism>
<name>XGHA_NEOFI</name>
<feature type="signal peptide" evidence="2">
    <location>
        <begin position="1"/>
        <end position="18"/>
    </location>
</feature>
<feature type="chain" id="PRO_0000394702" description="Probable endo-xylogalacturonan hydrolase A">
    <location>
        <begin position="19"/>
        <end position="406"/>
    </location>
</feature>
<feature type="repeat" description="PbH1 1">
    <location>
        <begin position="183"/>
        <end position="213"/>
    </location>
</feature>
<feature type="repeat" description="PbH1 2">
    <location>
        <begin position="214"/>
        <end position="235"/>
    </location>
</feature>
<feature type="repeat" description="PbH1 3">
    <location>
        <begin position="237"/>
        <end position="257"/>
    </location>
</feature>
<feature type="repeat" description="PbH1 4">
    <location>
        <begin position="299"/>
        <end position="320"/>
    </location>
</feature>
<feature type="active site" description="Proton donor" evidence="3">
    <location>
        <position position="228"/>
    </location>
</feature>
<feature type="active site" evidence="3">
    <location>
        <position position="251"/>
    </location>
</feature>
<feature type="glycosylation site" description="N-linked (GlcNAc...) asparagine" evidence="2">
    <location>
        <position position="244"/>
    </location>
</feature>
<feature type="glycosylation site" description="N-linked (GlcNAc...) asparagine" evidence="2">
    <location>
        <position position="301"/>
    </location>
</feature>
<sequence>MLYYRNLALLSLLSLSSAAPSQVERSPDAVFKPRAVCTPTAGGSSSIDDVPAIRKAISSCGNGGTIVFPAGSTYYLNSVLDLAGCSNCDIQVEGLLMFSGSTEYWGGKTAMININKINALKLRSLTGSGVIDGNGQNAYDLFASNSDYERPTLLYITGGSNIEVSGLRQRNPPNVFNSVKGDAKDVTFTNLRMDATSRSDNPPKNTDGFDIGSSTHVTISSVSVSNDDDCVALKPGCNYVTVENVTCTGSHGISVGSLGKSSADTVQNVYAHRITMIDSTKAAGIKTYPSGNGHGLSTVKNVTFSDFNVRGCDYAFQIQSCYGESASYCASHPGNAILQDIIVKGFSGTTSGKDDWVVADLNCGARGTCDVSMSDFSVKAPSGKATVLCANTPSSLGVTCTSGASG</sequence>
<gene>
    <name type="primary">xghA</name>
    <name type="ORF">NFIA_099610</name>
</gene>
<dbReference type="EC" id="3.2.1.-"/>
<dbReference type="EMBL" id="DS027694">
    <property type="protein sequence ID" value="EAW20325.1"/>
    <property type="molecule type" value="Genomic_DNA"/>
</dbReference>
<dbReference type="RefSeq" id="XP_001262222.1">
    <property type="nucleotide sequence ID" value="XM_001262221.1"/>
</dbReference>
<dbReference type="SMR" id="A1DBT5"/>
<dbReference type="STRING" id="331117.A1DBT5"/>
<dbReference type="GlyCosmos" id="A1DBT5">
    <property type="glycosylation" value="2 sites, No reported glycans"/>
</dbReference>
<dbReference type="EnsemblFungi" id="EAW20325">
    <property type="protein sequence ID" value="EAW20325"/>
    <property type="gene ID" value="NFIA_099610"/>
</dbReference>
<dbReference type="GeneID" id="4588576"/>
<dbReference type="KEGG" id="nfi:NFIA_099610"/>
<dbReference type="VEuPathDB" id="FungiDB:NFIA_099610"/>
<dbReference type="eggNOG" id="ENOG502QTHU">
    <property type="taxonomic scope" value="Eukaryota"/>
</dbReference>
<dbReference type="HOGENOM" id="CLU_016031_1_3_1"/>
<dbReference type="OMA" id="FKPGANY"/>
<dbReference type="OrthoDB" id="187139at2759"/>
<dbReference type="Proteomes" id="UP000006702">
    <property type="component" value="Unassembled WGS sequence"/>
</dbReference>
<dbReference type="GO" id="GO:0005576">
    <property type="term" value="C:extracellular region"/>
    <property type="evidence" value="ECO:0007669"/>
    <property type="project" value="UniProtKB-SubCell"/>
</dbReference>
<dbReference type="GO" id="GO:0004650">
    <property type="term" value="F:polygalacturonase activity"/>
    <property type="evidence" value="ECO:0007669"/>
    <property type="project" value="InterPro"/>
</dbReference>
<dbReference type="GO" id="GO:0071555">
    <property type="term" value="P:cell wall organization"/>
    <property type="evidence" value="ECO:0007669"/>
    <property type="project" value="UniProtKB-KW"/>
</dbReference>
<dbReference type="GO" id="GO:0045490">
    <property type="term" value="P:pectin catabolic process"/>
    <property type="evidence" value="ECO:0007669"/>
    <property type="project" value="UniProtKB-ARBA"/>
</dbReference>
<dbReference type="Gene3D" id="2.160.20.10">
    <property type="entry name" value="Single-stranded right-handed beta-helix, Pectin lyase-like"/>
    <property type="match status" value="1"/>
</dbReference>
<dbReference type="InterPro" id="IPR000743">
    <property type="entry name" value="Glyco_hydro_28"/>
</dbReference>
<dbReference type="InterPro" id="IPR006626">
    <property type="entry name" value="PbH1"/>
</dbReference>
<dbReference type="InterPro" id="IPR012334">
    <property type="entry name" value="Pectin_lyas_fold"/>
</dbReference>
<dbReference type="InterPro" id="IPR011050">
    <property type="entry name" value="Pectin_lyase_fold/virulence"/>
</dbReference>
<dbReference type="PANTHER" id="PTHR31736">
    <property type="match status" value="1"/>
</dbReference>
<dbReference type="PANTHER" id="PTHR31736:SF9">
    <property type="entry name" value="ENDO-XYLOGALACTURONAN HYDROLASE A-RELATED"/>
    <property type="match status" value="1"/>
</dbReference>
<dbReference type="Pfam" id="PF00295">
    <property type="entry name" value="Glyco_hydro_28"/>
    <property type="match status" value="1"/>
</dbReference>
<dbReference type="SMART" id="SM00710">
    <property type="entry name" value="PbH1"/>
    <property type="match status" value="4"/>
</dbReference>
<dbReference type="SUPFAM" id="SSF51126">
    <property type="entry name" value="Pectin lyase-like"/>
    <property type="match status" value="1"/>
</dbReference>
<dbReference type="PROSITE" id="PS00502">
    <property type="entry name" value="POLYGALACTURONASE"/>
    <property type="match status" value="1"/>
</dbReference>
<keyword id="KW-0119">Carbohydrate metabolism</keyword>
<keyword id="KW-0961">Cell wall biogenesis/degradation</keyword>
<keyword id="KW-0325">Glycoprotein</keyword>
<keyword id="KW-0326">Glycosidase</keyword>
<keyword id="KW-0378">Hydrolase</keyword>
<keyword id="KW-0624">Polysaccharide degradation</keyword>
<keyword id="KW-1185">Reference proteome</keyword>
<keyword id="KW-0677">Repeat</keyword>
<keyword id="KW-0964">Secreted</keyword>
<keyword id="KW-0732">Signal</keyword>
<protein>
    <recommendedName>
        <fullName>Probable endo-xylogalacturonan hydrolase A</fullName>
        <ecNumber>3.2.1.-</ecNumber>
    </recommendedName>
</protein>
<comment type="function">
    <text evidence="1">Pectinolytic enzyme involved in the degradation of xylogalacturonan (xga), a galacturonan backbone heavily substituted with xylose, and which is one important component of the hairy regions of pectin. Activity requires a galacturonic acid backbone substituted with xylose (By similarity).</text>
</comment>
<comment type="subcellular location">
    <subcellularLocation>
        <location evidence="1">Secreted</location>
    </subcellularLocation>
</comment>
<comment type="similarity">
    <text evidence="4">Belongs to the glycosyl hydrolase 28 family.</text>
</comment>
<evidence type="ECO:0000250" key="1"/>
<evidence type="ECO:0000255" key="2"/>
<evidence type="ECO:0000255" key="3">
    <source>
        <dbReference type="PROSITE-ProRule" id="PRU10052"/>
    </source>
</evidence>
<evidence type="ECO:0000305" key="4"/>
<accession>A1DBT5</accession>
<reference key="1">
    <citation type="journal article" date="2008" name="PLoS Genet.">
        <title>Genomic islands in the pathogenic filamentous fungus Aspergillus fumigatus.</title>
        <authorList>
            <person name="Fedorova N.D."/>
            <person name="Khaldi N."/>
            <person name="Joardar V.S."/>
            <person name="Maiti R."/>
            <person name="Amedeo P."/>
            <person name="Anderson M.J."/>
            <person name="Crabtree J."/>
            <person name="Silva J.C."/>
            <person name="Badger J.H."/>
            <person name="Albarraq A."/>
            <person name="Angiuoli S."/>
            <person name="Bussey H."/>
            <person name="Bowyer P."/>
            <person name="Cotty P.J."/>
            <person name="Dyer P.S."/>
            <person name="Egan A."/>
            <person name="Galens K."/>
            <person name="Fraser-Liggett C.M."/>
            <person name="Haas B.J."/>
            <person name="Inman J.M."/>
            <person name="Kent R."/>
            <person name="Lemieux S."/>
            <person name="Malavazi I."/>
            <person name="Orvis J."/>
            <person name="Roemer T."/>
            <person name="Ronning C.M."/>
            <person name="Sundaram J.P."/>
            <person name="Sutton G."/>
            <person name="Turner G."/>
            <person name="Venter J.C."/>
            <person name="White O.R."/>
            <person name="Whitty B.R."/>
            <person name="Youngman P."/>
            <person name="Wolfe K.H."/>
            <person name="Goldman G.H."/>
            <person name="Wortman J.R."/>
            <person name="Jiang B."/>
            <person name="Denning D.W."/>
            <person name="Nierman W.C."/>
        </authorList>
    </citation>
    <scope>NUCLEOTIDE SEQUENCE [LARGE SCALE GENOMIC DNA]</scope>
    <source>
        <strain>ATCC 1020 / DSM 3700 / CBS 544.65 / FGSC A1164 / JCM 1740 / NRRL 181 / WB 181</strain>
    </source>
</reference>